<reference key="1">
    <citation type="journal article" date="2001" name="Nature">
        <title>Complete genome sequence of Salmonella enterica serovar Typhimurium LT2.</title>
        <authorList>
            <person name="McClelland M."/>
            <person name="Sanderson K.E."/>
            <person name="Spieth J."/>
            <person name="Clifton S.W."/>
            <person name="Latreille P."/>
            <person name="Courtney L."/>
            <person name="Porwollik S."/>
            <person name="Ali J."/>
            <person name="Dante M."/>
            <person name="Du F."/>
            <person name="Hou S."/>
            <person name="Layman D."/>
            <person name="Leonard S."/>
            <person name="Nguyen C."/>
            <person name="Scott K."/>
            <person name="Holmes A."/>
            <person name="Grewal N."/>
            <person name="Mulvaney E."/>
            <person name="Ryan E."/>
            <person name="Sun H."/>
            <person name="Florea L."/>
            <person name="Miller W."/>
            <person name="Stoneking T."/>
            <person name="Nhan M."/>
            <person name="Waterston R."/>
            <person name="Wilson R.K."/>
        </authorList>
    </citation>
    <scope>NUCLEOTIDE SEQUENCE [LARGE SCALE GENOMIC DNA]</scope>
    <source>
        <strain>LT2 / SGSC1412 / ATCC 700720</strain>
    </source>
</reference>
<comment type="function">
    <text evidence="1">P-II indirectly controls the transcription of the glutamine synthetase gene (GlnA). P-II prevents NR-II-catalyzed conversion of NR-I to NR-I-phosphate, the transcriptional activator of GlnA. When P-II is uridylylated to P-II-UMP, these events are reversed. When the ratio of Gln to 2-ketoglutarate decreases, P-II is uridylylated to P-II-UMP, which causes the deadenylation of glutamine synthetase by GlnE, so activating the enzyme (By similarity).</text>
</comment>
<comment type="subunit">
    <text evidence="1">Homotrimer.</text>
</comment>
<comment type="PTM">
    <text evidence="1">Uridylylated/deuridylylated by GlnD.</text>
</comment>
<comment type="similarity">
    <text evidence="2">Belongs to the P(II) protein family.</text>
</comment>
<protein>
    <recommendedName>
        <fullName>Nitrogen regulatory protein P-II 1</fullName>
    </recommendedName>
</protein>
<dbReference type="EMBL" id="AE006468">
    <property type="protein sequence ID" value="AAL21455.1"/>
    <property type="molecule type" value="Genomic_DNA"/>
</dbReference>
<dbReference type="RefSeq" id="NP_461496.1">
    <property type="nucleotide sequence ID" value="NC_003197.2"/>
</dbReference>
<dbReference type="RefSeq" id="WP_000717694.1">
    <property type="nucleotide sequence ID" value="NC_003197.2"/>
</dbReference>
<dbReference type="SMR" id="P0A9Z4"/>
<dbReference type="STRING" id="99287.STM2561"/>
<dbReference type="PaxDb" id="99287-STM2561"/>
<dbReference type="GeneID" id="1254083"/>
<dbReference type="GeneID" id="93774582"/>
<dbReference type="KEGG" id="stm:STM2561"/>
<dbReference type="PATRIC" id="fig|99287.12.peg.2702"/>
<dbReference type="HOGENOM" id="CLU_082268_0_0_6"/>
<dbReference type="OMA" id="VECIIRP"/>
<dbReference type="PhylomeDB" id="P0A9Z4"/>
<dbReference type="PRO" id="PR:P0A9Z4"/>
<dbReference type="Proteomes" id="UP000001014">
    <property type="component" value="Chromosome"/>
</dbReference>
<dbReference type="GO" id="GO:0005829">
    <property type="term" value="C:cytosol"/>
    <property type="evidence" value="ECO:0000318"/>
    <property type="project" value="GO_Central"/>
</dbReference>
<dbReference type="GO" id="GO:0005524">
    <property type="term" value="F:ATP binding"/>
    <property type="evidence" value="ECO:0000318"/>
    <property type="project" value="GO_Central"/>
</dbReference>
<dbReference type="GO" id="GO:0030234">
    <property type="term" value="F:enzyme regulator activity"/>
    <property type="evidence" value="ECO:0000318"/>
    <property type="project" value="GO_Central"/>
</dbReference>
<dbReference type="GO" id="GO:0006808">
    <property type="term" value="P:regulation of nitrogen utilization"/>
    <property type="evidence" value="ECO:0000318"/>
    <property type="project" value="GO_Central"/>
</dbReference>
<dbReference type="FunFam" id="3.30.70.120:FF:000001">
    <property type="entry name" value="Nitrogen regulatory protein P-II"/>
    <property type="match status" value="1"/>
</dbReference>
<dbReference type="Gene3D" id="3.30.70.120">
    <property type="match status" value="1"/>
</dbReference>
<dbReference type="InterPro" id="IPR002187">
    <property type="entry name" value="N-reg_PII"/>
</dbReference>
<dbReference type="InterPro" id="IPR011322">
    <property type="entry name" value="N-reg_PII-like_a/b"/>
</dbReference>
<dbReference type="InterPro" id="IPR015867">
    <property type="entry name" value="N-reg_PII/ATP_PRibTrfase_C"/>
</dbReference>
<dbReference type="InterPro" id="IPR017918">
    <property type="entry name" value="N-reg_PII_CS"/>
</dbReference>
<dbReference type="InterPro" id="IPR002332">
    <property type="entry name" value="N-reg_PII_urydylation_site"/>
</dbReference>
<dbReference type="NCBIfam" id="NF008111">
    <property type="entry name" value="PRK10858.1"/>
    <property type="match status" value="1"/>
</dbReference>
<dbReference type="PANTHER" id="PTHR30115">
    <property type="entry name" value="NITROGEN REGULATORY PROTEIN P-II"/>
    <property type="match status" value="1"/>
</dbReference>
<dbReference type="PANTHER" id="PTHR30115:SF11">
    <property type="entry name" value="NITROGEN REGULATORY PROTEIN P-II HOMOLOG"/>
    <property type="match status" value="1"/>
</dbReference>
<dbReference type="Pfam" id="PF00543">
    <property type="entry name" value="P-II"/>
    <property type="match status" value="1"/>
</dbReference>
<dbReference type="PIRSF" id="PIRSF039144">
    <property type="entry name" value="GlnB"/>
    <property type="match status" value="1"/>
</dbReference>
<dbReference type="PRINTS" id="PR00340">
    <property type="entry name" value="PIIGLNB"/>
</dbReference>
<dbReference type="SMART" id="SM00938">
    <property type="entry name" value="P-II"/>
    <property type="match status" value="1"/>
</dbReference>
<dbReference type="SUPFAM" id="SSF54913">
    <property type="entry name" value="GlnB-like"/>
    <property type="match status" value="1"/>
</dbReference>
<dbReference type="PROSITE" id="PS00638">
    <property type="entry name" value="PII_GLNB_CTER"/>
    <property type="match status" value="1"/>
</dbReference>
<dbReference type="PROSITE" id="PS51343">
    <property type="entry name" value="PII_GLNB_DOM"/>
    <property type="match status" value="1"/>
</dbReference>
<dbReference type="PROSITE" id="PS00496">
    <property type="entry name" value="PII_GLNB_UMP"/>
    <property type="match status" value="1"/>
</dbReference>
<evidence type="ECO:0000250" key="1"/>
<evidence type="ECO:0000255" key="2">
    <source>
        <dbReference type="PROSITE-ProRule" id="PRU00675"/>
    </source>
</evidence>
<name>GLNB_SALTY</name>
<accession>P0A9Z4</accession>
<accession>P05826</accession>
<proteinExistence type="inferred from homology"/>
<gene>
    <name type="primary">glnB</name>
    <name type="ordered locus">STM2561</name>
</gene>
<keyword id="KW-0547">Nucleotide-binding</keyword>
<keyword id="KW-0597">Phosphoprotein</keyword>
<keyword id="KW-1185">Reference proteome</keyword>
<keyword id="KW-0804">Transcription</keyword>
<keyword id="KW-0805">Transcription regulation</keyword>
<feature type="chain" id="PRO_0000139790" description="Nitrogen regulatory protein P-II 1">
    <location>
        <begin position="1"/>
        <end position="112"/>
    </location>
</feature>
<feature type="modified residue" description="O-UMP-tyrosine" evidence="2">
    <location>
        <position position="51"/>
    </location>
</feature>
<organism>
    <name type="scientific">Salmonella typhimurium (strain LT2 / SGSC1412 / ATCC 700720)</name>
    <dbReference type="NCBI Taxonomy" id="99287"/>
    <lineage>
        <taxon>Bacteria</taxon>
        <taxon>Pseudomonadati</taxon>
        <taxon>Pseudomonadota</taxon>
        <taxon>Gammaproteobacteria</taxon>
        <taxon>Enterobacterales</taxon>
        <taxon>Enterobacteriaceae</taxon>
        <taxon>Salmonella</taxon>
    </lineage>
</organism>
<sequence length="112" mass="12425">MKKIDAIIKPFKLDDVREALAEVGITGMTVTEVKGFGRQKGHTELYRGAEYMVDFLPKVKIEIVVPDDIVDTCVDTIIRTAQTGKIGDGKIFVFDVARVIRIRTGEEDDAAI</sequence>